<comment type="function">
    <text evidence="1">Specifically methylates the N7 position of guanine in position 527 of 16S rRNA.</text>
</comment>
<comment type="catalytic activity">
    <reaction evidence="1">
        <text>guanosine(527) in 16S rRNA + S-adenosyl-L-methionine = N(7)-methylguanosine(527) in 16S rRNA + S-adenosyl-L-homocysteine</text>
        <dbReference type="Rhea" id="RHEA:42732"/>
        <dbReference type="Rhea" id="RHEA-COMP:10209"/>
        <dbReference type="Rhea" id="RHEA-COMP:10210"/>
        <dbReference type="ChEBI" id="CHEBI:57856"/>
        <dbReference type="ChEBI" id="CHEBI:59789"/>
        <dbReference type="ChEBI" id="CHEBI:74269"/>
        <dbReference type="ChEBI" id="CHEBI:74480"/>
        <dbReference type="EC" id="2.1.1.170"/>
    </reaction>
</comment>
<comment type="subcellular location">
    <subcellularLocation>
        <location evidence="1">Cytoplasm</location>
    </subcellularLocation>
</comment>
<comment type="similarity">
    <text evidence="1">Belongs to the methyltransferase superfamily. RNA methyltransferase RsmG family.</text>
</comment>
<evidence type="ECO:0000255" key="1">
    <source>
        <dbReference type="HAMAP-Rule" id="MF_00074"/>
    </source>
</evidence>
<feature type="chain" id="PRO_0000335446" description="Ribosomal RNA small subunit methyltransferase G">
    <location>
        <begin position="1"/>
        <end position="216"/>
    </location>
</feature>
<feature type="binding site" evidence="1">
    <location>
        <position position="81"/>
    </location>
    <ligand>
        <name>S-adenosyl-L-methionine</name>
        <dbReference type="ChEBI" id="CHEBI:59789"/>
    </ligand>
</feature>
<feature type="binding site" evidence="1">
    <location>
        <position position="86"/>
    </location>
    <ligand>
        <name>S-adenosyl-L-methionine</name>
        <dbReference type="ChEBI" id="CHEBI:59789"/>
    </ligand>
</feature>
<feature type="binding site" evidence="1">
    <location>
        <begin position="132"/>
        <end position="133"/>
    </location>
    <ligand>
        <name>S-adenosyl-L-methionine</name>
        <dbReference type="ChEBI" id="CHEBI:59789"/>
    </ligand>
</feature>
<feature type="binding site" evidence="1">
    <location>
        <position position="147"/>
    </location>
    <ligand>
        <name>S-adenosyl-L-methionine</name>
        <dbReference type="ChEBI" id="CHEBI:59789"/>
    </ligand>
</feature>
<reference key="1">
    <citation type="journal article" date="2006" name="PLoS Biol.">
        <title>The genome of deep-sea vent chemolithoautotroph Thiomicrospira crunogena XCL-2.</title>
        <authorList>
            <person name="Scott K.M."/>
            <person name="Sievert S.M."/>
            <person name="Abril F.N."/>
            <person name="Ball L.A."/>
            <person name="Barrett C.J."/>
            <person name="Blake R.A."/>
            <person name="Boller A.J."/>
            <person name="Chain P.S.G."/>
            <person name="Clark J.A."/>
            <person name="Davis C.R."/>
            <person name="Detter C."/>
            <person name="Do K.F."/>
            <person name="Dobrinski K.P."/>
            <person name="Faza B.I."/>
            <person name="Fitzpatrick K.A."/>
            <person name="Freyermuth S.K."/>
            <person name="Harmer T.L."/>
            <person name="Hauser L.J."/>
            <person name="Huegler M."/>
            <person name="Kerfeld C.A."/>
            <person name="Klotz M.G."/>
            <person name="Kong W.W."/>
            <person name="Land M."/>
            <person name="Lapidus A."/>
            <person name="Larimer F.W."/>
            <person name="Longo D.L."/>
            <person name="Lucas S."/>
            <person name="Malfatti S.A."/>
            <person name="Massey S.E."/>
            <person name="Martin D.D."/>
            <person name="McCuddin Z."/>
            <person name="Meyer F."/>
            <person name="Moore J.L."/>
            <person name="Ocampo L.H. Jr."/>
            <person name="Paul J.H."/>
            <person name="Paulsen I.T."/>
            <person name="Reep D.K."/>
            <person name="Ren Q."/>
            <person name="Ross R.L."/>
            <person name="Sato P.Y."/>
            <person name="Thomas P."/>
            <person name="Tinkham L.E."/>
            <person name="Zeruth G.T."/>
        </authorList>
    </citation>
    <scope>NUCLEOTIDE SEQUENCE [LARGE SCALE GENOMIC DNA]</scope>
    <source>
        <strain>DSM 25203 / XCL-2</strain>
    </source>
</reference>
<gene>
    <name evidence="1" type="primary">rsmG</name>
    <name type="ordered locus">Tcr_2176</name>
</gene>
<name>RSMG_HYDCU</name>
<proteinExistence type="inferred from homology"/>
<sequence>MTENEKHLYVARLDAAAEGFGLPKNDQAWSKLLDYLALLQKWNKTYNLTAIRDVDEMFIKHILDSLSVAPYIDSERLIDVGTGGGLPGIPLAILFPERQVDLLDSNSKKTRFLVQAKAELGLKNVEVVHHRVEAYHPETLYDGVVSRAFASLDDMLNWTHHLLKPQGHWWAMKAQKTQDEVAQLPNFAKMSQVFELHVPSLDAERTLIKIEKCQET</sequence>
<keyword id="KW-0963">Cytoplasm</keyword>
<keyword id="KW-0489">Methyltransferase</keyword>
<keyword id="KW-0698">rRNA processing</keyword>
<keyword id="KW-0949">S-adenosyl-L-methionine</keyword>
<keyword id="KW-0808">Transferase</keyword>
<protein>
    <recommendedName>
        <fullName evidence="1">Ribosomal RNA small subunit methyltransferase G</fullName>
        <ecNumber evidence="1">2.1.1.170</ecNumber>
    </recommendedName>
    <alternativeName>
        <fullName evidence="1">16S rRNA 7-methylguanosine methyltransferase</fullName>
        <shortName evidence="1">16S rRNA m7G methyltransferase</shortName>
    </alternativeName>
</protein>
<organism>
    <name type="scientific">Hydrogenovibrio crunogenus (strain DSM 25203 / XCL-2)</name>
    <name type="common">Thiomicrospira crunogena</name>
    <dbReference type="NCBI Taxonomy" id="317025"/>
    <lineage>
        <taxon>Bacteria</taxon>
        <taxon>Pseudomonadati</taxon>
        <taxon>Pseudomonadota</taxon>
        <taxon>Gammaproteobacteria</taxon>
        <taxon>Thiotrichales</taxon>
        <taxon>Piscirickettsiaceae</taxon>
        <taxon>Hydrogenovibrio</taxon>
    </lineage>
</organism>
<accession>Q31DK9</accession>
<dbReference type="EC" id="2.1.1.170" evidence="1"/>
<dbReference type="EMBL" id="CP000109">
    <property type="protein sequence ID" value="ABB42764.1"/>
    <property type="molecule type" value="Genomic_DNA"/>
</dbReference>
<dbReference type="SMR" id="Q31DK9"/>
<dbReference type="STRING" id="317025.Tcr_2176"/>
<dbReference type="KEGG" id="tcx:Tcr_2176"/>
<dbReference type="eggNOG" id="COG0357">
    <property type="taxonomic scope" value="Bacteria"/>
</dbReference>
<dbReference type="HOGENOM" id="CLU_065341_2_0_6"/>
<dbReference type="OrthoDB" id="9808773at2"/>
<dbReference type="GO" id="GO:0005829">
    <property type="term" value="C:cytosol"/>
    <property type="evidence" value="ECO:0007669"/>
    <property type="project" value="TreeGrafter"/>
</dbReference>
<dbReference type="GO" id="GO:0070043">
    <property type="term" value="F:rRNA (guanine-N7-)-methyltransferase activity"/>
    <property type="evidence" value="ECO:0007669"/>
    <property type="project" value="UniProtKB-UniRule"/>
</dbReference>
<dbReference type="CDD" id="cd02440">
    <property type="entry name" value="AdoMet_MTases"/>
    <property type="match status" value="1"/>
</dbReference>
<dbReference type="Gene3D" id="3.40.50.150">
    <property type="entry name" value="Vaccinia Virus protein VP39"/>
    <property type="match status" value="1"/>
</dbReference>
<dbReference type="HAMAP" id="MF_00074">
    <property type="entry name" value="16SrRNA_methyltr_G"/>
    <property type="match status" value="1"/>
</dbReference>
<dbReference type="InterPro" id="IPR003682">
    <property type="entry name" value="rRNA_ssu_MeTfrase_G"/>
</dbReference>
<dbReference type="InterPro" id="IPR029063">
    <property type="entry name" value="SAM-dependent_MTases_sf"/>
</dbReference>
<dbReference type="NCBIfam" id="TIGR00138">
    <property type="entry name" value="rsmG_gidB"/>
    <property type="match status" value="1"/>
</dbReference>
<dbReference type="PANTHER" id="PTHR31760">
    <property type="entry name" value="S-ADENOSYL-L-METHIONINE-DEPENDENT METHYLTRANSFERASES SUPERFAMILY PROTEIN"/>
    <property type="match status" value="1"/>
</dbReference>
<dbReference type="PANTHER" id="PTHR31760:SF0">
    <property type="entry name" value="S-ADENOSYL-L-METHIONINE-DEPENDENT METHYLTRANSFERASES SUPERFAMILY PROTEIN"/>
    <property type="match status" value="1"/>
</dbReference>
<dbReference type="Pfam" id="PF02527">
    <property type="entry name" value="GidB"/>
    <property type="match status" value="1"/>
</dbReference>
<dbReference type="PIRSF" id="PIRSF003078">
    <property type="entry name" value="GidB"/>
    <property type="match status" value="1"/>
</dbReference>
<dbReference type="SUPFAM" id="SSF53335">
    <property type="entry name" value="S-adenosyl-L-methionine-dependent methyltransferases"/>
    <property type="match status" value="1"/>
</dbReference>